<protein>
    <recommendedName>
        <fullName evidence="1">UPF0248 protein TK0315</fullName>
    </recommendedName>
</protein>
<comment type="similarity">
    <text evidence="1">Belongs to the UPF0248 family.</text>
</comment>
<keyword id="KW-1185">Reference proteome</keyword>
<evidence type="ECO:0000255" key="1">
    <source>
        <dbReference type="HAMAP-Rule" id="MF_01245"/>
    </source>
</evidence>
<accession>Q5JG00</accession>
<proteinExistence type="inferred from homology"/>
<sequence length="81" mass="9531">MRKGSVKEVLAKIKYDPREKEEDYYVVIEHRGAYGGEKKIPVELIELGHGYFFVGEAQIPYHRILRVVRKDGKVIWETKKL</sequence>
<organism>
    <name type="scientific">Thermococcus kodakarensis (strain ATCC BAA-918 / JCM 12380 / KOD1)</name>
    <name type="common">Pyrococcus kodakaraensis (strain KOD1)</name>
    <dbReference type="NCBI Taxonomy" id="69014"/>
    <lineage>
        <taxon>Archaea</taxon>
        <taxon>Methanobacteriati</taxon>
        <taxon>Methanobacteriota</taxon>
        <taxon>Thermococci</taxon>
        <taxon>Thermococcales</taxon>
        <taxon>Thermococcaceae</taxon>
        <taxon>Thermococcus</taxon>
    </lineage>
</organism>
<gene>
    <name type="ordered locus">TK0315</name>
</gene>
<reference key="1">
    <citation type="journal article" date="2005" name="Genome Res.">
        <title>Complete genome sequence of the hyperthermophilic archaeon Thermococcus kodakaraensis KOD1 and comparison with Pyrococcus genomes.</title>
        <authorList>
            <person name="Fukui T."/>
            <person name="Atomi H."/>
            <person name="Kanai T."/>
            <person name="Matsumi R."/>
            <person name="Fujiwara S."/>
            <person name="Imanaka T."/>
        </authorList>
    </citation>
    <scope>NUCLEOTIDE SEQUENCE [LARGE SCALE GENOMIC DNA]</scope>
    <source>
        <strain>ATCC BAA-918 / JCM 12380 / KOD1</strain>
    </source>
</reference>
<dbReference type="EMBL" id="AP006878">
    <property type="protein sequence ID" value="BAD84504.1"/>
    <property type="molecule type" value="Genomic_DNA"/>
</dbReference>
<dbReference type="RefSeq" id="WP_011249270.1">
    <property type="nucleotide sequence ID" value="NC_006624.1"/>
</dbReference>
<dbReference type="STRING" id="69014.TK0315"/>
<dbReference type="EnsemblBacteria" id="BAD84504">
    <property type="protein sequence ID" value="BAD84504"/>
    <property type="gene ID" value="TK0315"/>
</dbReference>
<dbReference type="GeneID" id="78446820"/>
<dbReference type="KEGG" id="tko:TK0315"/>
<dbReference type="PATRIC" id="fig|69014.16.peg.313"/>
<dbReference type="eggNOG" id="arCOG01302">
    <property type="taxonomic scope" value="Archaea"/>
</dbReference>
<dbReference type="HOGENOM" id="CLU_172276_3_1_2"/>
<dbReference type="InParanoid" id="Q5JG00"/>
<dbReference type="OrthoDB" id="14794at2157"/>
<dbReference type="PhylomeDB" id="Q5JG00"/>
<dbReference type="Proteomes" id="UP000000536">
    <property type="component" value="Chromosome"/>
</dbReference>
<dbReference type="HAMAP" id="MF_01245">
    <property type="entry name" value="UPF0248"/>
    <property type="match status" value="1"/>
</dbReference>
<dbReference type="InterPro" id="IPR040459">
    <property type="entry name" value="MJ1316"/>
</dbReference>
<dbReference type="InterPro" id="IPR007547">
    <property type="entry name" value="UPF0248"/>
</dbReference>
<dbReference type="NCBIfam" id="NF003272">
    <property type="entry name" value="PRK04257.1"/>
    <property type="match status" value="1"/>
</dbReference>
<dbReference type="Pfam" id="PF04457">
    <property type="entry name" value="MJ1316"/>
    <property type="match status" value="1"/>
</dbReference>
<feature type="chain" id="PRO_0000053421" description="UPF0248 protein TK0315">
    <location>
        <begin position="1"/>
        <end position="81"/>
    </location>
</feature>
<name>Y315_THEKO</name>